<sequence>MMLSPDQAADSDHPSSAHSDPESLGGTDTKVLGSVSDLEPVEEAEGDGKGGSRAALYPHPQQLSREEKRRRRRATAKYRSAHATRERIRVEAFNLAFAELRKLLPTLPPDKKLSKIEILRLAICYISYLNHVLDV</sequence>
<organism>
    <name type="scientific">Homo sapiens</name>
    <name type="common">Human</name>
    <dbReference type="NCBI Taxonomy" id="9606"/>
    <lineage>
        <taxon>Eukaryota</taxon>
        <taxon>Metazoa</taxon>
        <taxon>Chordata</taxon>
        <taxon>Craniata</taxon>
        <taxon>Vertebrata</taxon>
        <taxon>Euteleostomi</taxon>
        <taxon>Mammalia</taxon>
        <taxon>Eutheria</taxon>
        <taxon>Euarchontoglires</taxon>
        <taxon>Primates</taxon>
        <taxon>Haplorrhini</taxon>
        <taxon>Catarrhini</taxon>
        <taxon>Hominidae</taxon>
        <taxon>Homo</taxon>
    </lineage>
</organism>
<evidence type="ECO:0000250" key="1">
    <source>
        <dbReference type="UniProtKB" id="Q64221"/>
    </source>
</evidence>
<evidence type="ECO:0000255" key="2">
    <source>
        <dbReference type="PROSITE-ProRule" id="PRU00981"/>
    </source>
</evidence>
<evidence type="ECO:0000256" key="3">
    <source>
        <dbReference type="SAM" id="MobiDB-lite"/>
    </source>
</evidence>
<evidence type="ECO:0000269" key="4">
    <source>
    </source>
</evidence>
<proteinExistence type="evidence at protein level"/>
<gene>
    <name type="primary">NHLH2</name>
    <name type="synonym">BHLHA34</name>
    <name type="synonym">HEN2</name>
    <name type="synonym">KIAA0490</name>
</gene>
<dbReference type="EMBL" id="M97508">
    <property type="protein sequence ID" value="AAA58635.1"/>
    <property type="molecule type" value="Genomic_DNA"/>
</dbReference>
<dbReference type="EMBL" id="AB007959">
    <property type="status" value="NOT_ANNOTATED_CDS"/>
    <property type="molecule type" value="mRNA"/>
</dbReference>
<dbReference type="EMBL" id="AL449264">
    <property type="status" value="NOT_ANNOTATED_CDS"/>
    <property type="molecule type" value="Genomic_DNA"/>
</dbReference>
<dbReference type="EMBL" id="BC096359">
    <property type="protein sequence ID" value="AAH96359.1"/>
    <property type="molecule type" value="mRNA"/>
</dbReference>
<dbReference type="EMBL" id="BC096360">
    <property type="protein sequence ID" value="AAH96360.1"/>
    <property type="molecule type" value="mRNA"/>
</dbReference>
<dbReference type="CCDS" id="CCDS885.1"/>
<dbReference type="PIR" id="B45075">
    <property type="entry name" value="B45075"/>
</dbReference>
<dbReference type="RefSeq" id="NP_001104531.1">
    <property type="nucleotide sequence ID" value="NM_001111061.2"/>
</dbReference>
<dbReference type="RefSeq" id="NP_005590.1">
    <property type="nucleotide sequence ID" value="NM_005599.3"/>
</dbReference>
<dbReference type="RefSeq" id="XP_047277363.1">
    <property type="nucleotide sequence ID" value="XM_047421407.1"/>
</dbReference>
<dbReference type="SMR" id="Q02577"/>
<dbReference type="BioGRID" id="110873">
    <property type="interactions" value="26"/>
</dbReference>
<dbReference type="CORUM" id="Q02577"/>
<dbReference type="FunCoup" id="Q02577">
    <property type="interactions" value="205"/>
</dbReference>
<dbReference type="IntAct" id="Q02577">
    <property type="interactions" value="23"/>
</dbReference>
<dbReference type="MINT" id="Q02577"/>
<dbReference type="STRING" id="9606.ENSP00000358519"/>
<dbReference type="iPTMnet" id="Q02577"/>
<dbReference type="PhosphoSitePlus" id="Q02577"/>
<dbReference type="BioMuta" id="NHLH2"/>
<dbReference type="DMDM" id="399887"/>
<dbReference type="MassIVE" id="Q02577"/>
<dbReference type="PaxDb" id="9606-ENSP00000358519"/>
<dbReference type="PeptideAtlas" id="Q02577"/>
<dbReference type="Antibodypedia" id="33870">
    <property type="antibodies" value="198 antibodies from 23 providers"/>
</dbReference>
<dbReference type="DNASU" id="4808"/>
<dbReference type="Ensembl" id="ENST00000320238.3">
    <property type="protein sequence ID" value="ENSP00000322087.3"/>
    <property type="gene ID" value="ENSG00000177551.5"/>
</dbReference>
<dbReference type="Ensembl" id="ENST00000369506.1">
    <property type="protein sequence ID" value="ENSP00000358519.1"/>
    <property type="gene ID" value="ENSG00000177551.5"/>
</dbReference>
<dbReference type="GeneID" id="4808"/>
<dbReference type="KEGG" id="hsa:4808"/>
<dbReference type="MANE-Select" id="ENST00000320238.3">
    <property type="protein sequence ID" value="ENSP00000322087.3"/>
    <property type="RefSeq nucleotide sequence ID" value="NM_005599.3"/>
    <property type="RefSeq protein sequence ID" value="NP_005590.1"/>
</dbReference>
<dbReference type="UCSC" id="uc001efy.4">
    <property type="organism name" value="human"/>
</dbReference>
<dbReference type="AGR" id="HGNC:7818"/>
<dbReference type="CTD" id="4808"/>
<dbReference type="DisGeNET" id="4808"/>
<dbReference type="GeneCards" id="NHLH2"/>
<dbReference type="HGNC" id="HGNC:7818">
    <property type="gene designation" value="NHLH2"/>
</dbReference>
<dbReference type="HPA" id="ENSG00000177551">
    <property type="expression patterns" value="Group enriched (brain, esophagus, retina, skin)"/>
</dbReference>
<dbReference type="MalaCards" id="NHLH2"/>
<dbReference type="MIM" id="162361">
    <property type="type" value="gene"/>
</dbReference>
<dbReference type="MIM" id="619755">
    <property type="type" value="phenotype"/>
</dbReference>
<dbReference type="neXtProt" id="NX_Q02577"/>
<dbReference type="OpenTargets" id="ENSG00000177551"/>
<dbReference type="Orphanet" id="432">
    <property type="disease" value="Normosmic congenital hypogonadotropic hypogonadism"/>
</dbReference>
<dbReference type="PharmGKB" id="PA31620"/>
<dbReference type="VEuPathDB" id="HostDB:ENSG00000177551"/>
<dbReference type="eggNOG" id="KOG4029">
    <property type="taxonomic scope" value="Eukaryota"/>
</dbReference>
<dbReference type="GeneTree" id="ENSGT00940000162602"/>
<dbReference type="HOGENOM" id="CLU_148882_1_0_1"/>
<dbReference type="InParanoid" id="Q02577"/>
<dbReference type="OMA" id="KALGCCA"/>
<dbReference type="OrthoDB" id="10067827at2759"/>
<dbReference type="PAN-GO" id="Q02577">
    <property type="GO annotations" value="3 GO annotations based on evolutionary models"/>
</dbReference>
<dbReference type="PhylomeDB" id="Q02577"/>
<dbReference type="PathwayCommons" id="Q02577"/>
<dbReference type="SignaLink" id="Q02577"/>
<dbReference type="SIGNOR" id="Q02577"/>
<dbReference type="BioGRID-ORCS" id="4808">
    <property type="hits" value="17 hits in 1173 CRISPR screens"/>
</dbReference>
<dbReference type="GenomeRNAi" id="4808"/>
<dbReference type="Pharos" id="Q02577">
    <property type="development level" value="Tbio"/>
</dbReference>
<dbReference type="PRO" id="PR:Q02577"/>
<dbReference type="Proteomes" id="UP000005640">
    <property type="component" value="Chromosome 1"/>
</dbReference>
<dbReference type="RNAct" id="Q02577">
    <property type="molecule type" value="protein"/>
</dbReference>
<dbReference type="Bgee" id="ENSG00000177551">
    <property type="expression patterns" value="Expressed in buccal mucosa cell and 79 other cell types or tissues"/>
</dbReference>
<dbReference type="ExpressionAtlas" id="Q02577">
    <property type="expression patterns" value="baseline and differential"/>
</dbReference>
<dbReference type="GO" id="GO:0000785">
    <property type="term" value="C:chromatin"/>
    <property type="evidence" value="ECO:0000247"/>
    <property type="project" value="NTNU_SB"/>
</dbReference>
<dbReference type="GO" id="GO:0005634">
    <property type="term" value="C:nucleus"/>
    <property type="evidence" value="ECO:0007669"/>
    <property type="project" value="UniProtKB-SubCell"/>
</dbReference>
<dbReference type="GO" id="GO:0005667">
    <property type="term" value="C:transcription regulator complex"/>
    <property type="evidence" value="ECO:0000304"/>
    <property type="project" value="BHF-UCL"/>
</dbReference>
<dbReference type="GO" id="GO:0001228">
    <property type="term" value="F:DNA-binding transcription activator activity, RNA polymerase II-specific"/>
    <property type="evidence" value="ECO:0007669"/>
    <property type="project" value="Ensembl"/>
</dbReference>
<dbReference type="GO" id="GO:0000981">
    <property type="term" value="F:DNA-binding transcription factor activity, RNA polymerase II-specific"/>
    <property type="evidence" value="ECO:0000247"/>
    <property type="project" value="NTNU_SB"/>
</dbReference>
<dbReference type="GO" id="GO:0046983">
    <property type="term" value="F:protein dimerization activity"/>
    <property type="evidence" value="ECO:0007669"/>
    <property type="project" value="InterPro"/>
</dbReference>
<dbReference type="GO" id="GO:0000978">
    <property type="term" value="F:RNA polymerase II cis-regulatory region sequence-specific DNA binding"/>
    <property type="evidence" value="ECO:0000318"/>
    <property type="project" value="GO_Central"/>
</dbReference>
<dbReference type="GO" id="GO:0061629">
    <property type="term" value="F:RNA polymerase II-specific DNA-binding transcription factor binding"/>
    <property type="evidence" value="ECO:0007669"/>
    <property type="project" value="Ensembl"/>
</dbReference>
<dbReference type="GO" id="GO:1990837">
    <property type="term" value="F:sequence-specific double-stranded DNA binding"/>
    <property type="evidence" value="ECO:0000314"/>
    <property type="project" value="ARUK-UCL"/>
</dbReference>
<dbReference type="GO" id="GO:0001223">
    <property type="term" value="F:transcription coactivator binding"/>
    <property type="evidence" value="ECO:0000353"/>
    <property type="project" value="BHF-UCL"/>
</dbReference>
<dbReference type="GO" id="GO:0006915">
    <property type="term" value="P:apoptotic process"/>
    <property type="evidence" value="ECO:0007669"/>
    <property type="project" value="Ensembl"/>
</dbReference>
<dbReference type="GO" id="GO:0021535">
    <property type="term" value="P:cell migration in hindbrain"/>
    <property type="evidence" value="ECO:0007669"/>
    <property type="project" value="Ensembl"/>
</dbReference>
<dbReference type="GO" id="GO:0007417">
    <property type="term" value="P:central nervous system development"/>
    <property type="evidence" value="ECO:0000304"/>
    <property type="project" value="ProtInc"/>
</dbReference>
<dbReference type="GO" id="GO:0021888">
    <property type="term" value="P:hypothalamus gonadotrophin-releasing hormone neuron development"/>
    <property type="evidence" value="ECO:0007669"/>
    <property type="project" value="Ensembl"/>
</dbReference>
<dbReference type="GO" id="GO:0008584">
    <property type="term" value="P:male gonad development"/>
    <property type="evidence" value="ECO:0007669"/>
    <property type="project" value="Ensembl"/>
</dbReference>
<dbReference type="GO" id="GO:0060179">
    <property type="term" value="P:male mating behavior"/>
    <property type="evidence" value="ECO:0007669"/>
    <property type="project" value="Ensembl"/>
</dbReference>
<dbReference type="GO" id="GO:0042698">
    <property type="term" value="P:ovulation cycle"/>
    <property type="evidence" value="ECO:0007669"/>
    <property type="project" value="Ensembl"/>
</dbReference>
<dbReference type="GO" id="GO:0007422">
    <property type="term" value="P:peripheral nervous system development"/>
    <property type="evidence" value="ECO:0007669"/>
    <property type="project" value="Ensembl"/>
</dbReference>
<dbReference type="GO" id="GO:0045944">
    <property type="term" value="P:positive regulation of transcription by RNA polymerase II"/>
    <property type="evidence" value="ECO:0000304"/>
    <property type="project" value="BHF-UCL"/>
</dbReference>
<dbReference type="GO" id="GO:0006357">
    <property type="term" value="P:regulation of transcription by RNA polymerase II"/>
    <property type="evidence" value="ECO:0000318"/>
    <property type="project" value="GO_Central"/>
</dbReference>
<dbReference type="CDD" id="cd19701">
    <property type="entry name" value="bHLH_TS_HEN1"/>
    <property type="match status" value="1"/>
</dbReference>
<dbReference type="FunFam" id="4.10.280.10:FF:000027">
    <property type="entry name" value="Nescient helix-loop-helix 1"/>
    <property type="match status" value="1"/>
</dbReference>
<dbReference type="Gene3D" id="4.10.280.10">
    <property type="entry name" value="Helix-loop-helix DNA-binding domain"/>
    <property type="match status" value="1"/>
</dbReference>
<dbReference type="InterPro" id="IPR011598">
    <property type="entry name" value="bHLH_dom"/>
</dbReference>
<dbReference type="InterPro" id="IPR036638">
    <property type="entry name" value="HLH_DNA-bd_sf"/>
</dbReference>
<dbReference type="InterPro" id="IPR040238">
    <property type="entry name" value="TAL-like"/>
</dbReference>
<dbReference type="PANTHER" id="PTHR13864:SF19">
    <property type="entry name" value="HELIX-LOOP-HELIX PROTEIN 2"/>
    <property type="match status" value="1"/>
</dbReference>
<dbReference type="PANTHER" id="PTHR13864">
    <property type="entry name" value="T-CELL ACUTE LYMPHOCYTIC LEUKEMIA/STEM CELL LEUKEMIA-RELATED"/>
    <property type="match status" value="1"/>
</dbReference>
<dbReference type="Pfam" id="PF00010">
    <property type="entry name" value="HLH"/>
    <property type="match status" value="1"/>
</dbReference>
<dbReference type="SMART" id="SM00353">
    <property type="entry name" value="HLH"/>
    <property type="match status" value="1"/>
</dbReference>
<dbReference type="SUPFAM" id="SSF47459">
    <property type="entry name" value="HLH, helix-loop-helix DNA-binding domain"/>
    <property type="match status" value="1"/>
</dbReference>
<dbReference type="PROSITE" id="PS50888">
    <property type="entry name" value="BHLH"/>
    <property type="match status" value="1"/>
</dbReference>
<keyword id="KW-0010">Activator</keyword>
<keyword id="KW-0217">Developmental protein</keyword>
<keyword id="KW-0221">Differentiation</keyword>
<keyword id="KW-0238">DNA-binding</keyword>
<keyword id="KW-1016">Hypogonadotropic hypogonadism</keyword>
<keyword id="KW-0539">Nucleus</keyword>
<keyword id="KW-1185">Reference proteome</keyword>
<keyword id="KW-0804">Transcription</keyword>
<keyword id="KW-0805">Transcription regulation</keyword>
<feature type="chain" id="PRO_0000127199" description="Helix-loop-helix protein 2">
    <location>
        <begin position="1"/>
        <end position="135"/>
    </location>
</feature>
<feature type="domain" description="bHLH" evidence="2">
    <location>
        <begin position="77"/>
        <end position="129"/>
    </location>
</feature>
<feature type="region of interest" description="Disordered" evidence="3">
    <location>
        <begin position="1"/>
        <end position="80"/>
    </location>
</feature>
<feature type="compositionally biased region" description="Basic and acidic residues" evidence="3">
    <location>
        <begin position="10"/>
        <end position="21"/>
    </location>
</feature>
<feature type="compositionally biased region" description="Basic residues" evidence="3">
    <location>
        <begin position="68"/>
        <end position="80"/>
    </location>
</feature>
<feature type="sequence variant" id="VAR_086934" description="Found in a patient with features of hypogonadotropic hypogonadism and Kabuki syndrome also carrying a KMT2D variant; uncertain significance; reduced transactivation activity on KISS1 promoter; requires 2 nucleotide substitutions." evidence="4">
    <original>A</original>
    <variation>L</variation>
    <location>
        <position position="9"/>
    </location>
</feature>
<feature type="sequence variant" id="VAR_086935" description="In HH27; uncertain significance; the patient also carries KISS1 and PROKR2 variants." evidence="4">
    <original>V</original>
    <variation>M</variation>
    <location>
        <position position="31"/>
    </location>
</feature>
<feature type="sequence variant" id="VAR_086936" description="In HH27; uncertain significance; severely reduced binding to MC4R promoter; reduced transactivation activity on KISS1 promoter." evidence="4">
    <original>R</original>
    <variation>C</variation>
    <location>
        <position position="79"/>
    </location>
</feature>
<reference key="1">
    <citation type="journal article" date="1992" name="Proc. Natl. Acad. Sci. U.S.A.">
        <title>HEN1 and HEN2: a subgroup of basic helix-loop-helix genes that are coexpressed in a human neuroblastoma.</title>
        <authorList>
            <person name="Brown L."/>
            <person name="Espinosa R. III"/>
            <person name="le Beau M.M."/>
            <person name="Siciliano M.J."/>
            <person name="Baer R."/>
        </authorList>
    </citation>
    <scope>NUCLEOTIDE SEQUENCE [GENOMIC DNA]</scope>
    <source>
        <tissue>Brain</tissue>
    </source>
</reference>
<reference key="2">
    <citation type="journal article" date="1992" name="J. Biol. Chem.">
        <title>A comparative structural characterization of the human NSCL-1 and NSCL-2 genes. Two basic helix-loop-helix genes expressed in the developing nervous system.</title>
        <authorList>
            <person name="Lipkowitz S."/>
            <person name="Gobel V."/>
            <person name="Varterasian M.L."/>
            <person name="Nakahara K."/>
            <person name="Tchorz K."/>
            <person name="Kirsch I.R."/>
        </authorList>
    </citation>
    <scope>NUCLEOTIDE SEQUENCE [GENOMIC DNA]</scope>
    <source>
        <tissue>Brain</tissue>
    </source>
</reference>
<reference key="3">
    <citation type="journal article" date="1997" name="DNA Res.">
        <title>Characterization of cDNA clones in size-fractionated cDNA libraries from human brain.</title>
        <authorList>
            <person name="Seki N."/>
            <person name="Ohira M."/>
            <person name="Nagase T."/>
            <person name="Ishikawa K."/>
            <person name="Miyajima N."/>
            <person name="Nakajima D."/>
            <person name="Nomura N."/>
            <person name="Ohara O."/>
        </authorList>
    </citation>
    <scope>NUCLEOTIDE SEQUENCE [LARGE SCALE MRNA]</scope>
    <source>
        <tissue>Brain</tissue>
    </source>
</reference>
<reference key="4">
    <citation type="journal article" date="2006" name="Nature">
        <title>The DNA sequence and biological annotation of human chromosome 1.</title>
        <authorList>
            <person name="Gregory S.G."/>
            <person name="Barlow K.F."/>
            <person name="McLay K.E."/>
            <person name="Kaul R."/>
            <person name="Swarbreck D."/>
            <person name="Dunham A."/>
            <person name="Scott C.E."/>
            <person name="Howe K.L."/>
            <person name="Woodfine K."/>
            <person name="Spencer C.C.A."/>
            <person name="Jones M.C."/>
            <person name="Gillson C."/>
            <person name="Searle S."/>
            <person name="Zhou Y."/>
            <person name="Kokocinski F."/>
            <person name="McDonald L."/>
            <person name="Evans R."/>
            <person name="Phillips K."/>
            <person name="Atkinson A."/>
            <person name="Cooper R."/>
            <person name="Jones C."/>
            <person name="Hall R.E."/>
            <person name="Andrews T.D."/>
            <person name="Lloyd C."/>
            <person name="Ainscough R."/>
            <person name="Almeida J.P."/>
            <person name="Ambrose K.D."/>
            <person name="Anderson F."/>
            <person name="Andrew R.W."/>
            <person name="Ashwell R.I.S."/>
            <person name="Aubin K."/>
            <person name="Babbage A.K."/>
            <person name="Bagguley C.L."/>
            <person name="Bailey J."/>
            <person name="Beasley H."/>
            <person name="Bethel G."/>
            <person name="Bird C.P."/>
            <person name="Bray-Allen S."/>
            <person name="Brown J.Y."/>
            <person name="Brown A.J."/>
            <person name="Buckley D."/>
            <person name="Burton J."/>
            <person name="Bye J."/>
            <person name="Carder C."/>
            <person name="Chapman J.C."/>
            <person name="Clark S.Y."/>
            <person name="Clarke G."/>
            <person name="Clee C."/>
            <person name="Cobley V."/>
            <person name="Collier R.E."/>
            <person name="Corby N."/>
            <person name="Coville G.J."/>
            <person name="Davies J."/>
            <person name="Deadman R."/>
            <person name="Dunn M."/>
            <person name="Earthrowl M."/>
            <person name="Ellington A.G."/>
            <person name="Errington H."/>
            <person name="Frankish A."/>
            <person name="Frankland J."/>
            <person name="French L."/>
            <person name="Garner P."/>
            <person name="Garnett J."/>
            <person name="Gay L."/>
            <person name="Ghori M.R.J."/>
            <person name="Gibson R."/>
            <person name="Gilby L.M."/>
            <person name="Gillett W."/>
            <person name="Glithero R.J."/>
            <person name="Grafham D.V."/>
            <person name="Griffiths C."/>
            <person name="Griffiths-Jones S."/>
            <person name="Grocock R."/>
            <person name="Hammond S."/>
            <person name="Harrison E.S.I."/>
            <person name="Hart E."/>
            <person name="Haugen E."/>
            <person name="Heath P.D."/>
            <person name="Holmes S."/>
            <person name="Holt K."/>
            <person name="Howden P.J."/>
            <person name="Hunt A.R."/>
            <person name="Hunt S.E."/>
            <person name="Hunter G."/>
            <person name="Isherwood J."/>
            <person name="James R."/>
            <person name="Johnson C."/>
            <person name="Johnson D."/>
            <person name="Joy A."/>
            <person name="Kay M."/>
            <person name="Kershaw J.K."/>
            <person name="Kibukawa M."/>
            <person name="Kimberley A.M."/>
            <person name="King A."/>
            <person name="Knights A.J."/>
            <person name="Lad H."/>
            <person name="Laird G."/>
            <person name="Lawlor S."/>
            <person name="Leongamornlert D.A."/>
            <person name="Lloyd D.M."/>
            <person name="Loveland J."/>
            <person name="Lovell J."/>
            <person name="Lush M.J."/>
            <person name="Lyne R."/>
            <person name="Martin S."/>
            <person name="Mashreghi-Mohammadi M."/>
            <person name="Matthews L."/>
            <person name="Matthews N.S.W."/>
            <person name="McLaren S."/>
            <person name="Milne S."/>
            <person name="Mistry S."/>
            <person name="Moore M.J.F."/>
            <person name="Nickerson T."/>
            <person name="O'Dell C.N."/>
            <person name="Oliver K."/>
            <person name="Palmeiri A."/>
            <person name="Palmer S.A."/>
            <person name="Parker A."/>
            <person name="Patel D."/>
            <person name="Pearce A.V."/>
            <person name="Peck A.I."/>
            <person name="Pelan S."/>
            <person name="Phelps K."/>
            <person name="Phillimore B.J."/>
            <person name="Plumb R."/>
            <person name="Rajan J."/>
            <person name="Raymond C."/>
            <person name="Rouse G."/>
            <person name="Saenphimmachak C."/>
            <person name="Sehra H.K."/>
            <person name="Sheridan E."/>
            <person name="Shownkeen R."/>
            <person name="Sims S."/>
            <person name="Skuce C.D."/>
            <person name="Smith M."/>
            <person name="Steward C."/>
            <person name="Subramanian S."/>
            <person name="Sycamore N."/>
            <person name="Tracey A."/>
            <person name="Tromans A."/>
            <person name="Van Helmond Z."/>
            <person name="Wall M."/>
            <person name="Wallis J.M."/>
            <person name="White S."/>
            <person name="Whitehead S.L."/>
            <person name="Wilkinson J.E."/>
            <person name="Willey D.L."/>
            <person name="Williams H."/>
            <person name="Wilming L."/>
            <person name="Wray P.W."/>
            <person name="Wu Z."/>
            <person name="Coulson A."/>
            <person name="Vaudin M."/>
            <person name="Sulston J.E."/>
            <person name="Durbin R.M."/>
            <person name="Hubbard T."/>
            <person name="Wooster R."/>
            <person name="Dunham I."/>
            <person name="Carter N.P."/>
            <person name="McVean G."/>
            <person name="Ross M.T."/>
            <person name="Harrow J."/>
            <person name="Olson M.V."/>
            <person name="Beck S."/>
            <person name="Rogers J."/>
            <person name="Bentley D.R."/>
        </authorList>
    </citation>
    <scope>NUCLEOTIDE SEQUENCE [LARGE SCALE GENOMIC DNA]</scope>
</reference>
<reference key="5">
    <citation type="journal article" date="2004" name="Genome Res.">
        <title>The status, quality, and expansion of the NIH full-length cDNA project: the Mammalian Gene Collection (MGC).</title>
        <authorList>
            <consortium name="The MGC Project Team"/>
        </authorList>
    </citation>
    <scope>NUCLEOTIDE SEQUENCE [LARGE SCALE MRNA]</scope>
</reference>
<reference key="6">
    <citation type="journal article" date="2022" name="Hum. Genet.">
        <title>Inactivating NHLH2 variants cause idiopathic hypogonadotropic hypogonadism and obesity in humans.</title>
        <authorList>
            <person name="Topaloglu A.K."/>
            <person name="Simsek E."/>
            <person name="Kocher M.A."/>
            <person name="Mammadova J."/>
            <person name="Bober E."/>
            <person name="Kotan L.D."/>
            <person name="Turan I."/>
            <person name="Celiloglu C."/>
            <person name="Gurbuz F."/>
            <person name="Yuksel B."/>
            <person name="Good D.J."/>
        </authorList>
    </citation>
    <scope>VARIANT LEU-9</scope>
    <scope>VARIANTS HH27 MET-31 AND CYS-79</scope>
    <scope>CHARACTERIZATION OF VARIANT LEU-9</scope>
    <scope>CHARACTERIZATION OF VARIANT HH27 CYS-79</scope>
    <scope>INVOLVEMENT IN HH27</scope>
    <scope>FUNCTION</scope>
</reference>
<comment type="function">
    <text evidence="1 4">Transcription factor which binds the E box motif 5'-CA[TC][AG]TG-3'. Involved in regulating energy expenditure, body mass, voluntary physical activity, mating behavior and reproductive longevity, acting through the hypothalamic-pituitary-gonadal axis. Acts as a transcriptional activator of target genes, including NDN, PCSK1, MC4R (By similarity). Is also a transcriptional activator of KISS1 (PubMed:35066646). May act centrally to regulate function of both white and brown adipose tissue. Together with NHLH1, required to maintain migration and survival of cells in the anterior extramural migration stream (aes), which forms the precerebellar nuclei. Also, in concert with NHLH1, may determine fate of gonadotropin releasing hormone-1 (GnRH-1) neurons.</text>
</comment>
<comment type="subunit">
    <text evidence="1">Homodimer. Interacts and may form heterodimers with STAT3.</text>
</comment>
<comment type="interaction">
    <interactant intactId="EBI-5378683">
        <id>Q02577</id>
    </interactant>
    <interactant intactId="EBI-22452746">
        <id>Q9NZI2-2</id>
        <label>KCNIP1</label>
    </interactant>
    <organismsDiffer>false</organismsDiffer>
    <experiments>3</experiments>
</comment>
<comment type="interaction">
    <interactant intactId="EBI-5378683">
        <id>Q02577</id>
    </interactant>
    <interactant intactId="EBI-17491620">
        <id>P13349</id>
        <label>MYF5</label>
    </interactant>
    <organismsDiffer>false</organismsDiffer>
    <experiments>3</experiments>
</comment>
<comment type="interaction">
    <interactant intactId="EBI-5378683">
        <id>Q02577</id>
    </interactant>
    <interactant intactId="EBI-1802965">
        <id>Q96EB6</id>
        <label>SIRT1</label>
    </interactant>
    <organismsDiffer>false</organismsDiffer>
    <experiments>2</experiments>
</comment>
<comment type="interaction">
    <interactant intactId="EBI-5378683">
        <id>Q02577</id>
    </interactant>
    <interactant intactId="EBI-716128">
        <id>Q9H5J8</id>
        <label>TAF1D</label>
    </interactant>
    <organismsDiffer>false</organismsDiffer>
    <experiments>3</experiments>
</comment>
<comment type="interaction">
    <interactant intactId="EBI-5378683">
        <id>Q02577</id>
    </interactant>
    <interactant intactId="EBI-11952764">
        <id>Q99081-3</id>
        <label>TCF12</label>
    </interactant>
    <organismsDiffer>false</organismsDiffer>
    <experiments>3</experiments>
</comment>
<comment type="interaction">
    <interactant intactId="EBI-5378683">
        <id>Q02577</id>
    </interactant>
    <interactant intactId="EBI-13636688">
        <id>P15884-3</id>
        <label>TCF4</label>
    </interactant>
    <organismsDiffer>false</organismsDiffer>
    <experiments>3</experiments>
</comment>
<comment type="subcellular location">
    <subcellularLocation>
        <location evidence="2">Nucleus</location>
    </subcellularLocation>
</comment>
<comment type="disease" evidence="4">
    <disease id="DI-06349">
        <name>Hypogonadotropic hypogonadism 27 without anosmia</name>
        <acronym>HH27</acronym>
        <description>A form of hypogonadotropic hypogonadism, a group of disorders characterized by absent or incomplete sexual maturation by the age of 18 years, in conjunction with low levels of circulating gonadotropins and testosterone, and no other abnormalities of the hypothalamic-pituitary axis. In some cases, it is associated with non-reproductive phenotypes, such as anosmia, cleft palate, and sensorineural hearing loss. Anosmia or hyposmia is related to the absence or hypoplasia of the olfactory bulbs and tracts. In the presence of anosmia, idiopathic hypogonadotropic hypogonadism is referred to as Kallmann syndrome, whereas in the presence of a normal sense of smell, it has been termed normosmic idiopathic hypogonadotropic hypogonadism (nIHH). HH27 is an autosomal recessive normosmic form characterized by lack of pubertal development associated with onset of obesity in early adolescence.</description>
        <dbReference type="MIM" id="619755"/>
    </disease>
    <text>The disease may be caused by variants affecting the gene represented in this entry.</text>
</comment>
<accession>Q02577</accession>
<accession>Q5T1P6</accession>
<protein>
    <recommendedName>
        <fullName>Helix-loop-helix protein 2</fullName>
        <shortName>HEN-2</shortName>
    </recommendedName>
    <alternativeName>
        <fullName>Class A basic helix-loop-helix protein 34</fullName>
        <shortName>bHLHa34</shortName>
    </alternativeName>
    <alternativeName>
        <fullName>Nescient helix loop helix 2</fullName>
        <shortName>NSCL-2</shortName>
    </alternativeName>
</protein>
<name>HEN2_HUMAN</name>